<feature type="chain" id="PRO_0000139081" description="CCA-adding enzyme">
    <location>
        <begin position="1"/>
        <end position="416"/>
    </location>
</feature>
<feature type="binding site" evidence="1">
    <location>
        <position position="42"/>
    </location>
    <ligand>
        <name>ATP</name>
        <dbReference type="ChEBI" id="CHEBI:30616"/>
    </ligand>
</feature>
<feature type="binding site" evidence="1">
    <location>
        <position position="42"/>
    </location>
    <ligand>
        <name>CTP</name>
        <dbReference type="ChEBI" id="CHEBI:37563"/>
    </ligand>
</feature>
<feature type="binding site" evidence="1">
    <location>
        <position position="45"/>
    </location>
    <ligand>
        <name>ATP</name>
        <dbReference type="ChEBI" id="CHEBI:30616"/>
    </ligand>
</feature>
<feature type="binding site" evidence="1">
    <location>
        <position position="45"/>
    </location>
    <ligand>
        <name>CTP</name>
        <dbReference type="ChEBI" id="CHEBI:37563"/>
    </ligand>
</feature>
<feature type="binding site" evidence="1">
    <location>
        <position position="54"/>
    </location>
    <ligand>
        <name>Mg(2+)</name>
        <dbReference type="ChEBI" id="CHEBI:18420"/>
    </ligand>
</feature>
<feature type="binding site" evidence="1">
    <location>
        <position position="56"/>
    </location>
    <ligand>
        <name>Mg(2+)</name>
        <dbReference type="ChEBI" id="CHEBI:18420"/>
    </ligand>
</feature>
<feature type="binding site" evidence="1">
    <location>
        <position position="107"/>
    </location>
    <ligand>
        <name>Mg(2+)</name>
        <dbReference type="ChEBI" id="CHEBI:18420"/>
    </ligand>
</feature>
<feature type="binding site" evidence="1">
    <location>
        <position position="130"/>
    </location>
    <ligand>
        <name>ATP</name>
        <dbReference type="ChEBI" id="CHEBI:30616"/>
    </ligand>
</feature>
<feature type="binding site" evidence="1">
    <location>
        <position position="130"/>
    </location>
    <ligand>
        <name>CTP</name>
        <dbReference type="ChEBI" id="CHEBI:37563"/>
    </ligand>
</feature>
<feature type="binding site" evidence="1">
    <location>
        <position position="150"/>
    </location>
    <ligand>
        <name>ATP</name>
        <dbReference type="ChEBI" id="CHEBI:30616"/>
    </ligand>
</feature>
<feature type="binding site" evidence="1">
    <location>
        <position position="150"/>
    </location>
    <ligand>
        <name>CTP</name>
        <dbReference type="ChEBI" id="CHEBI:37563"/>
    </ligand>
</feature>
<feature type="binding site" evidence="1">
    <location>
        <position position="159"/>
    </location>
    <ligand>
        <name>ATP</name>
        <dbReference type="ChEBI" id="CHEBI:30616"/>
    </ligand>
</feature>
<feature type="binding site" evidence="1">
    <location>
        <position position="159"/>
    </location>
    <ligand>
        <name>CTP</name>
        <dbReference type="ChEBI" id="CHEBI:37563"/>
    </ligand>
</feature>
<organism>
    <name type="scientific">Sulfolobus acidocaldarius (strain ATCC 33909 / DSM 639 / JCM 8929 / NBRC 15157 / NCIMB 11770)</name>
    <dbReference type="NCBI Taxonomy" id="330779"/>
    <lineage>
        <taxon>Archaea</taxon>
        <taxon>Thermoproteota</taxon>
        <taxon>Thermoprotei</taxon>
        <taxon>Sulfolobales</taxon>
        <taxon>Sulfolobaceae</taxon>
        <taxon>Sulfolobus</taxon>
    </lineage>
</organism>
<gene>
    <name evidence="1" type="primary">cca</name>
    <name type="ordered locus">Saci_1288</name>
</gene>
<evidence type="ECO:0000255" key="1">
    <source>
        <dbReference type="HAMAP-Rule" id="MF_01264"/>
    </source>
</evidence>
<accession>Q4J9A0</accession>
<proteinExistence type="inferred from homology"/>
<reference key="1">
    <citation type="journal article" date="2005" name="J. Bacteriol.">
        <title>The genome of Sulfolobus acidocaldarius, a model organism of the Crenarchaeota.</title>
        <authorList>
            <person name="Chen L."/>
            <person name="Bruegger K."/>
            <person name="Skovgaard M."/>
            <person name="Redder P."/>
            <person name="She Q."/>
            <person name="Torarinsson E."/>
            <person name="Greve B."/>
            <person name="Awayez M."/>
            <person name="Zibat A."/>
            <person name="Klenk H.-P."/>
            <person name="Garrett R.A."/>
        </authorList>
    </citation>
    <scope>NUCLEOTIDE SEQUENCE [LARGE SCALE GENOMIC DNA]</scope>
    <source>
        <strain>ATCC 33909 / DSM 639 / JCM 8929 / NBRC 15157 / NCIMB 11770</strain>
    </source>
</reference>
<comment type="function">
    <text evidence="1">Catalyzes the addition and repair of the essential 3'-terminal CCA sequence in tRNAs without using a nucleic acid template. Adds these three nucleotides in the order of C, C, and A to the tRNA nucleotide-73, using CTP and ATP as substrates and producing inorganic pyrophosphate. tRNA 3'-terminal CCA addition is required both for tRNA processing and repair. Also involved in tRNA surveillance by mediating tandem CCA addition to generate a CCACCA at the 3' terminus of unstable tRNAs. While stable tRNAs receive only 3'-terminal CCA, unstable tRNAs are marked with CCACCA and rapidly degraded.</text>
</comment>
<comment type="catalytic activity">
    <reaction evidence="1">
        <text>a tRNA precursor + 2 CTP + ATP = a tRNA with a 3' CCA end + 3 diphosphate</text>
        <dbReference type="Rhea" id="RHEA:14433"/>
        <dbReference type="Rhea" id="RHEA-COMP:10465"/>
        <dbReference type="Rhea" id="RHEA-COMP:10468"/>
        <dbReference type="ChEBI" id="CHEBI:30616"/>
        <dbReference type="ChEBI" id="CHEBI:33019"/>
        <dbReference type="ChEBI" id="CHEBI:37563"/>
        <dbReference type="ChEBI" id="CHEBI:74896"/>
        <dbReference type="ChEBI" id="CHEBI:83071"/>
        <dbReference type="EC" id="2.7.7.72"/>
    </reaction>
</comment>
<comment type="catalytic activity">
    <reaction evidence="1">
        <text>a tRNA with a 3' CCA end + 2 CTP + ATP = a tRNA with a 3' CCACCA end + 3 diphosphate</text>
        <dbReference type="Rhea" id="RHEA:76235"/>
        <dbReference type="Rhea" id="RHEA-COMP:10468"/>
        <dbReference type="Rhea" id="RHEA-COMP:18655"/>
        <dbReference type="ChEBI" id="CHEBI:30616"/>
        <dbReference type="ChEBI" id="CHEBI:33019"/>
        <dbReference type="ChEBI" id="CHEBI:37563"/>
        <dbReference type="ChEBI" id="CHEBI:83071"/>
        <dbReference type="ChEBI" id="CHEBI:195187"/>
    </reaction>
    <physiologicalReaction direction="left-to-right" evidence="1">
        <dbReference type="Rhea" id="RHEA:76236"/>
    </physiologicalReaction>
</comment>
<comment type="cofactor">
    <cofactor evidence="1">
        <name>Mg(2+)</name>
        <dbReference type="ChEBI" id="CHEBI:18420"/>
    </cofactor>
</comment>
<comment type="subunit">
    <text evidence="1">Homodimer.</text>
</comment>
<comment type="miscellaneous">
    <text evidence="1">A single active site specifically recognizes both ATP and CTP and is responsible for their addition.</text>
</comment>
<comment type="similarity">
    <text evidence="1">Belongs to the tRNA nucleotidyltransferase/poly(A) polymerase family. Archaeal CCA-adding enzyme subfamily.</text>
</comment>
<dbReference type="EC" id="2.7.7.72" evidence="1"/>
<dbReference type="EMBL" id="CP000077">
    <property type="protein sequence ID" value="AAY80630.1"/>
    <property type="molecule type" value="Genomic_DNA"/>
</dbReference>
<dbReference type="RefSeq" id="WP_011278132.1">
    <property type="nucleotide sequence ID" value="NC_007181.1"/>
</dbReference>
<dbReference type="SMR" id="Q4J9A0"/>
<dbReference type="STRING" id="330779.Saci_1288"/>
<dbReference type="GeneID" id="14551793"/>
<dbReference type="GeneID" id="78441634"/>
<dbReference type="KEGG" id="sai:Saci_1288"/>
<dbReference type="PATRIC" id="fig|330779.12.peg.1246"/>
<dbReference type="eggNOG" id="arCOG04249">
    <property type="taxonomic scope" value="Archaea"/>
</dbReference>
<dbReference type="HOGENOM" id="CLU_044679_1_0_2"/>
<dbReference type="Proteomes" id="UP000001018">
    <property type="component" value="Chromosome"/>
</dbReference>
<dbReference type="GO" id="GO:0005524">
    <property type="term" value="F:ATP binding"/>
    <property type="evidence" value="ECO:0007669"/>
    <property type="project" value="UniProtKB-UniRule"/>
</dbReference>
<dbReference type="GO" id="GO:0004810">
    <property type="term" value="F:CCA tRNA nucleotidyltransferase activity"/>
    <property type="evidence" value="ECO:0007669"/>
    <property type="project" value="UniProtKB-UniRule"/>
</dbReference>
<dbReference type="GO" id="GO:0000287">
    <property type="term" value="F:magnesium ion binding"/>
    <property type="evidence" value="ECO:0007669"/>
    <property type="project" value="UniProtKB-UniRule"/>
</dbReference>
<dbReference type="GO" id="GO:0000049">
    <property type="term" value="F:tRNA binding"/>
    <property type="evidence" value="ECO:0007669"/>
    <property type="project" value="UniProtKB-UniRule"/>
</dbReference>
<dbReference type="GO" id="GO:0042245">
    <property type="term" value="P:RNA repair"/>
    <property type="evidence" value="ECO:0007669"/>
    <property type="project" value="UniProtKB-KW"/>
</dbReference>
<dbReference type="GO" id="GO:0001680">
    <property type="term" value="P:tRNA 3'-terminal CCA addition"/>
    <property type="evidence" value="ECO:0007669"/>
    <property type="project" value="UniProtKB-UniRule"/>
</dbReference>
<dbReference type="CDD" id="cd05400">
    <property type="entry name" value="NT_2-5OAS_ClassI-CCAase"/>
    <property type="match status" value="1"/>
</dbReference>
<dbReference type="Gene3D" id="3.30.460.10">
    <property type="entry name" value="Beta Polymerase, domain 2"/>
    <property type="match status" value="1"/>
</dbReference>
<dbReference type="Gene3D" id="1.10.1410.30">
    <property type="entry name" value="CCA tRNA nucleotidyltransferase, domain 2"/>
    <property type="match status" value="1"/>
</dbReference>
<dbReference type="Gene3D" id="3.30.70.590">
    <property type="entry name" value="Poly(A) polymerase predicted RNA binding domain"/>
    <property type="match status" value="1"/>
</dbReference>
<dbReference type="HAMAP" id="MF_01264">
    <property type="entry name" value="CCA_arch"/>
    <property type="match status" value="1"/>
</dbReference>
<dbReference type="InterPro" id="IPR048833">
    <property type="entry name" value="CAA_C"/>
</dbReference>
<dbReference type="InterPro" id="IPR008229">
    <property type="entry name" value="CCA-adding_arc"/>
</dbReference>
<dbReference type="InterPro" id="IPR042090">
    <property type="entry name" value="CCA_tRNA_nucleotrans_2"/>
</dbReference>
<dbReference type="InterPro" id="IPR006116">
    <property type="entry name" value="NT_2-5OAS_ClassI-CCAase"/>
</dbReference>
<dbReference type="InterPro" id="IPR043519">
    <property type="entry name" value="NT_sf"/>
</dbReference>
<dbReference type="InterPro" id="IPR011068">
    <property type="entry name" value="NuclTrfase_I-like_C"/>
</dbReference>
<dbReference type="InterPro" id="IPR002934">
    <property type="entry name" value="Polymerase_NTP_transf_dom"/>
</dbReference>
<dbReference type="InterPro" id="IPR015329">
    <property type="entry name" value="tRNA_NucTransf2"/>
</dbReference>
<dbReference type="NCBIfam" id="TIGR03671">
    <property type="entry name" value="cca_archaeal"/>
    <property type="match status" value="1"/>
</dbReference>
<dbReference type="PANTHER" id="PTHR39643">
    <property type="entry name" value="CCA-ADDING ENZYME"/>
    <property type="match status" value="1"/>
</dbReference>
<dbReference type="PANTHER" id="PTHR39643:SF1">
    <property type="entry name" value="CCA-ADDING ENZYME"/>
    <property type="match status" value="1"/>
</dbReference>
<dbReference type="Pfam" id="PF21133">
    <property type="entry name" value="CAA_C"/>
    <property type="match status" value="1"/>
</dbReference>
<dbReference type="Pfam" id="PF01909">
    <property type="entry name" value="NTP_transf_2"/>
    <property type="match status" value="1"/>
</dbReference>
<dbReference type="Pfam" id="PF09249">
    <property type="entry name" value="tRNA_NucTransf2"/>
    <property type="match status" value="1"/>
</dbReference>
<dbReference type="PIRSF" id="PIRSF005335">
    <property type="entry name" value="CCA_arch"/>
    <property type="match status" value="1"/>
</dbReference>
<dbReference type="SUPFAM" id="SSF81301">
    <property type="entry name" value="Nucleotidyltransferase"/>
    <property type="match status" value="1"/>
</dbReference>
<dbReference type="SUPFAM" id="SSF55003">
    <property type="entry name" value="PAP/Archaeal CCA-adding enzyme, C-terminal domain"/>
    <property type="match status" value="1"/>
</dbReference>
<dbReference type="SUPFAM" id="SSF81631">
    <property type="entry name" value="PAP/OAS1 substrate-binding domain"/>
    <property type="match status" value="1"/>
</dbReference>
<keyword id="KW-0067">ATP-binding</keyword>
<keyword id="KW-0460">Magnesium</keyword>
<keyword id="KW-0479">Metal-binding</keyword>
<keyword id="KW-0547">Nucleotide-binding</keyword>
<keyword id="KW-0548">Nucleotidyltransferase</keyword>
<keyword id="KW-1185">Reference proteome</keyword>
<keyword id="KW-0692">RNA repair</keyword>
<keyword id="KW-0694">RNA-binding</keyword>
<keyword id="KW-0808">Transferase</keyword>
<keyword id="KW-0819">tRNA processing</keyword>
<sequence>MSVEEKVLELIRPDDKDRERLEKVAEEVLSRLKGFDAQIQGSFRKGTWLKGDTDIDIFVFYPKEVGKEYLREKSLKELIQLFQDLNYEIAFAEHPYLILKINNVEVDVVPALKIDSGEDVITAADRTPFHTKFVTTHLDEKGKDEVRLLKQFMKGIGVYGAEIKVKGFSGYVAELLTIYYGNFRKVLESAKTWKPPIKLNLVEPKRDFDEPLQIPDPVDPKRNTASAVSLRNIAVFSLASKIFIERPSIEFFFPTEIKAEEIIGDILLIKVEFKEKSVEDIIWGQVWKNVEKLKNAIKTAGFSLIDIGAWGNSQTVKIAVQIEDKNISRYYLNQGPYFYVNGVDNFMRKNKYVWVGEDGRLYSLKKRRETNLEKIVLNNLSFKENFSVEMTWLSEINQDDKELHKFLRKRPTWMQT</sequence>
<name>CCA_SULAC</name>
<protein>
    <recommendedName>
        <fullName evidence="1">CCA-adding enzyme</fullName>
        <ecNumber evidence="1">2.7.7.72</ecNumber>
    </recommendedName>
    <alternativeName>
        <fullName evidence="1">CCA tRNA nucleotidyltransferase</fullName>
    </alternativeName>
    <alternativeName>
        <fullName evidence="1">tRNA CCA-pyrophosphorylase</fullName>
    </alternativeName>
    <alternativeName>
        <fullName evidence="1">tRNA adenylyl-/cytidylyl- transferase</fullName>
    </alternativeName>
    <alternativeName>
        <fullName evidence="1">tRNA nucleotidyltransferase</fullName>
    </alternativeName>
    <alternativeName>
        <fullName evidence="1">tRNA-NT</fullName>
    </alternativeName>
</protein>